<gene>
    <name type="primary">AICDA</name>
</gene>
<accession>Q2PT36</accession>
<feature type="chain" id="PRO_0000232719" description="Single-stranded DNA cytosine deaminase">
    <location>
        <begin position="1"/>
        <end position="199"/>
    </location>
</feature>
<feature type="domain" description="CMP/dCMP-type deaminase" evidence="5">
    <location>
        <begin position="23"/>
        <end position="130"/>
    </location>
</feature>
<feature type="region of interest" description="Interaction with SUPT6H" evidence="3">
    <location>
        <begin position="2"/>
        <end position="26"/>
    </location>
</feature>
<feature type="region of interest" description="Important for interaction with CTNNBL1" evidence="3">
    <location>
        <begin position="39"/>
        <end position="42"/>
    </location>
</feature>
<feature type="region of interest" description="Required for interaction with RNF126" evidence="3">
    <location>
        <begin position="88"/>
        <end position="116"/>
    </location>
</feature>
<feature type="short sequence motif" description="Bipartite nuclear localization signal" evidence="3">
    <location>
        <begin position="1"/>
        <end position="30"/>
    </location>
</feature>
<feature type="short sequence motif" description="Nuclear export signal" evidence="3">
    <location>
        <begin position="184"/>
        <end position="199"/>
    </location>
</feature>
<feature type="active site" description="Proton donor" evidence="2">
    <location>
        <position position="58"/>
    </location>
</feature>
<feature type="binding site" evidence="3">
    <location>
        <position position="56"/>
    </location>
    <ligand>
        <name>Zn(2+)</name>
        <dbReference type="ChEBI" id="CHEBI:29105"/>
        <note>catalytic</note>
    </ligand>
</feature>
<feature type="binding site" evidence="3">
    <location>
        <position position="87"/>
    </location>
    <ligand>
        <name>Zn(2+)</name>
        <dbReference type="ChEBI" id="CHEBI:29105"/>
        <note>catalytic</note>
    </ligand>
</feature>
<feature type="binding site" evidence="3">
    <location>
        <position position="90"/>
    </location>
    <ligand>
        <name>Zn(2+)</name>
        <dbReference type="ChEBI" id="CHEBI:29105"/>
        <note>catalytic</note>
    </ligand>
</feature>
<feature type="modified residue" description="Phosphothreonine; by PKA" evidence="3">
    <location>
        <position position="27"/>
    </location>
</feature>
<feature type="modified residue" description="Phosphoserine; by PKA" evidence="3">
    <location>
        <position position="38"/>
    </location>
</feature>
<organism>
    <name type="scientific">Bos taurus</name>
    <name type="common">Bovine</name>
    <dbReference type="NCBI Taxonomy" id="9913"/>
    <lineage>
        <taxon>Eukaryota</taxon>
        <taxon>Metazoa</taxon>
        <taxon>Chordata</taxon>
        <taxon>Craniata</taxon>
        <taxon>Vertebrata</taxon>
        <taxon>Euteleostomi</taxon>
        <taxon>Mammalia</taxon>
        <taxon>Eutheria</taxon>
        <taxon>Laurasiatheria</taxon>
        <taxon>Artiodactyla</taxon>
        <taxon>Ruminantia</taxon>
        <taxon>Pecora</taxon>
        <taxon>Bovidae</taxon>
        <taxon>Bovinae</taxon>
        <taxon>Bos</taxon>
    </lineage>
</organism>
<name>AICDA_BOVIN</name>
<comment type="function">
    <text evidence="3">Single-stranded DNA-specific cytidine deaminase. Involved in somatic hypermutation (SHM), gene conversion, and class-switch recombination (CSR) in B-lymphocytes by deaminating C to U during transcription of Ig-variable (V) and Ig-switch (S) region DNA. Required for several crucial steps of B-cell terminal differentiation necessary for efficient antibody responses. May also play a role in the epigenetic regulation of gene expression by participating in DNA demethylation.</text>
</comment>
<comment type="catalytic activity">
    <reaction evidence="4">
        <text>a 2'-deoxycytidine in single-stranded DNA + H2O + H(+) = a 2'-deoxyuridine in single-stranded DNA + NH4(+)</text>
        <dbReference type="Rhea" id="RHEA:50948"/>
        <dbReference type="Rhea" id="RHEA-COMP:12846"/>
        <dbReference type="Rhea" id="RHEA-COMP:12847"/>
        <dbReference type="ChEBI" id="CHEBI:15377"/>
        <dbReference type="ChEBI" id="CHEBI:15378"/>
        <dbReference type="ChEBI" id="CHEBI:28938"/>
        <dbReference type="ChEBI" id="CHEBI:85452"/>
        <dbReference type="ChEBI" id="CHEBI:133902"/>
        <dbReference type="EC" id="3.5.4.38"/>
    </reaction>
</comment>
<comment type="cofactor">
    <cofactor evidence="3">
        <name>Zn(2+)</name>
        <dbReference type="ChEBI" id="CHEBI:29105"/>
    </cofactor>
</comment>
<comment type="subunit">
    <text evidence="3 4">Interacts with CTNNBL1; the interaction is important for the immunoglobulin switch activity of AICDA. Interacts (via its NLS) with KPNA1. Interacts with PKA/PRKACA and PRKAR1A/PKR1. Interacts with SUPT6H, TRIM28 and NCL. Directly interacts with MCM3AP; this interaction may favor AICDA recruitment to immunoglobulin variable region genes, hence promoting somatic hypermutations (By similarity).</text>
</comment>
<comment type="subcellular location">
    <subcellularLocation>
        <location evidence="3">Nucleus</location>
    </subcellularLocation>
    <subcellularLocation>
        <location evidence="3">Cytoplasm</location>
    </subcellularLocation>
    <text evidence="4">Predominantly cytoplasmic. In the presence of MCM3AP/GANP, relocalizes to the nucleus.</text>
</comment>
<comment type="tissue specificity">
    <text evidence="6">Expressed in lymph nodes, spleen and thymus.</text>
</comment>
<comment type="PTM">
    <text evidence="1">Ser-38 is the major site whereas Thr-27 is the minor site of phosphorylation. Phosphorylation regulates its class-switch recombination activity (By similarity).</text>
</comment>
<comment type="PTM">
    <text evidence="3">Probably monoubiquitinated on several residues by RNF126.</text>
</comment>
<comment type="similarity">
    <text evidence="7">Belongs to the cytidine and deoxycytidylate deaminase family.</text>
</comment>
<reference key="1">
    <citation type="journal article" date="2010" name="Vet. Immunol. Immunopathol.">
        <title>Cloning and expression of activation induced cytidine deaminase from Bos taurus.</title>
        <authorList>
            <person name="Verma S."/>
            <person name="Goldammer T."/>
            <person name="Aitken R."/>
        </authorList>
    </citation>
    <scope>NUCLEOTIDE SEQUENCE [MRNA]</scope>
    <scope>TISSUE SPECIFICITY</scope>
    <source>
        <tissue>Spleen</tissue>
    </source>
</reference>
<keyword id="KW-0963">Cytoplasm</keyword>
<keyword id="KW-0378">Hydrolase</keyword>
<keyword id="KW-0479">Metal-binding</keyword>
<keyword id="KW-0507">mRNA processing</keyword>
<keyword id="KW-0539">Nucleus</keyword>
<keyword id="KW-0597">Phosphoprotein</keyword>
<keyword id="KW-1185">Reference proteome</keyword>
<keyword id="KW-0832">Ubl conjugation</keyword>
<keyword id="KW-0862">Zinc</keyword>
<dbReference type="EC" id="3.5.4.38" evidence="4"/>
<dbReference type="EMBL" id="DQ303466">
    <property type="protein sequence ID" value="ABC46408.1"/>
    <property type="molecule type" value="mRNA"/>
</dbReference>
<dbReference type="RefSeq" id="NP_001033771.1">
    <property type="nucleotide sequence ID" value="NM_001038682.1"/>
</dbReference>
<dbReference type="SMR" id="Q2PT36"/>
<dbReference type="FunCoup" id="Q2PT36">
    <property type="interactions" value="208"/>
</dbReference>
<dbReference type="STRING" id="9913.ENSBTAP00000025096"/>
<dbReference type="PaxDb" id="9913-ENSBTAP00000025096"/>
<dbReference type="GeneID" id="539888"/>
<dbReference type="KEGG" id="bta:539888"/>
<dbReference type="CTD" id="57379"/>
<dbReference type="eggNOG" id="KOG4075">
    <property type="taxonomic scope" value="Eukaryota"/>
</dbReference>
<dbReference type="InParanoid" id="Q2PT36"/>
<dbReference type="OrthoDB" id="8676111at2759"/>
<dbReference type="BRENDA" id="3.5.4.38">
    <property type="organism ID" value="908"/>
</dbReference>
<dbReference type="Proteomes" id="UP000009136">
    <property type="component" value="Unplaced"/>
</dbReference>
<dbReference type="GO" id="GO:0005737">
    <property type="term" value="C:cytoplasm"/>
    <property type="evidence" value="ECO:0000250"/>
    <property type="project" value="UniProtKB"/>
</dbReference>
<dbReference type="GO" id="GO:0005634">
    <property type="term" value="C:nucleus"/>
    <property type="evidence" value="ECO:0000250"/>
    <property type="project" value="UniProtKB"/>
</dbReference>
<dbReference type="GO" id="GO:0000932">
    <property type="term" value="C:P-body"/>
    <property type="evidence" value="ECO:0000318"/>
    <property type="project" value="GO_Central"/>
</dbReference>
<dbReference type="GO" id="GO:0004126">
    <property type="term" value="F:cytidine deaminase activity"/>
    <property type="evidence" value="ECO:0000250"/>
    <property type="project" value="UniProtKB"/>
</dbReference>
<dbReference type="GO" id="GO:0003723">
    <property type="term" value="F:RNA binding"/>
    <property type="evidence" value="ECO:0000318"/>
    <property type="project" value="GO_Central"/>
</dbReference>
<dbReference type="GO" id="GO:0008270">
    <property type="term" value="F:zinc ion binding"/>
    <property type="evidence" value="ECO:0007669"/>
    <property type="project" value="InterPro"/>
</dbReference>
<dbReference type="GO" id="GO:0009972">
    <property type="term" value="P:cytidine deamination"/>
    <property type="evidence" value="ECO:0000250"/>
    <property type="project" value="UniProtKB"/>
</dbReference>
<dbReference type="GO" id="GO:0016554">
    <property type="term" value="P:cytidine to uridine editing"/>
    <property type="evidence" value="ECO:0000318"/>
    <property type="project" value="GO_Central"/>
</dbReference>
<dbReference type="GO" id="GO:0051607">
    <property type="term" value="P:defense response to virus"/>
    <property type="evidence" value="ECO:0000318"/>
    <property type="project" value="GO_Central"/>
</dbReference>
<dbReference type="GO" id="GO:0070383">
    <property type="term" value="P:DNA cytosine deamination"/>
    <property type="evidence" value="ECO:0000318"/>
    <property type="project" value="GO_Central"/>
</dbReference>
<dbReference type="GO" id="GO:0006397">
    <property type="term" value="P:mRNA processing"/>
    <property type="evidence" value="ECO:0007669"/>
    <property type="project" value="UniProtKB-KW"/>
</dbReference>
<dbReference type="GO" id="GO:0045869">
    <property type="term" value="P:negative regulation of single stranded viral RNA replication via double stranded DNA intermediate"/>
    <property type="evidence" value="ECO:0000318"/>
    <property type="project" value="GO_Central"/>
</dbReference>
<dbReference type="GO" id="GO:0044029">
    <property type="term" value="P:positive regulation of gene expression via chromosomal CpG island demethylation"/>
    <property type="evidence" value="ECO:0000250"/>
    <property type="project" value="UniProtKB"/>
</dbReference>
<dbReference type="GO" id="GO:0016446">
    <property type="term" value="P:somatic hypermutation of immunoglobulin genes"/>
    <property type="evidence" value="ECO:0000250"/>
    <property type="project" value="UniProtKB"/>
</dbReference>
<dbReference type="CDD" id="cd01283">
    <property type="entry name" value="cytidine_deaminase"/>
    <property type="match status" value="1"/>
</dbReference>
<dbReference type="FunFam" id="3.40.140.10:FF:000022">
    <property type="entry name" value="Single-stranded DNA cytosine deaminase"/>
    <property type="match status" value="1"/>
</dbReference>
<dbReference type="Gene3D" id="3.40.140.10">
    <property type="entry name" value="Cytidine Deaminase, domain 2"/>
    <property type="match status" value="1"/>
</dbReference>
<dbReference type="InterPro" id="IPR016192">
    <property type="entry name" value="APOBEC/CMP_deaminase_Zn-bd"/>
</dbReference>
<dbReference type="InterPro" id="IPR050610">
    <property type="entry name" value="APOBEC_Cyt_Deaminase"/>
</dbReference>
<dbReference type="InterPro" id="IPR013158">
    <property type="entry name" value="APOBEC_N"/>
</dbReference>
<dbReference type="InterPro" id="IPR002125">
    <property type="entry name" value="CMP_dCMP_dom"/>
</dbReference>
<dbReference type="InterPro" id="IPR016193">
    <property type="entry name" value="Cytidine_deaminase-like"/>
</dbReference>
<dbReference type="PANTHER" id="PTHR13857">
    <property type="entry name" value="MRNA EDITING ENZYME"/>
    <property type="match status" value="1"/>
</dbReference>
<dbReference type="PANTHER" id="PTHR13857:SF10">
    <property type="entry name" value="SINGLE-STRANDED DNA CYTOSINE DEAMINASE"/>
    <property type="match status" value="1"/>
</dbReference>
<dbReference type="Pfam" id="PF08210">
    <property type="entry name" value="APOBEC_N"/>
    <property type="match status" value="1"/>
</dbReference>
<dbReference type="SUPFAM" id="SSF53927">
    <property type="entry name" value="Cytidine deaminase-like"/>
    <property type="match status" value="1"/>
</dbReference>
<dbReference type="PROSITE" id="PS00903">
    <property type="entry name" value="CYT_DCMP_DEAMINASES_1"/>
    <property type="match status" value="1"/>
</dbReference>
<dbReference type="PROSITE" id="PS51747">
    <property type="entry name" value="CYT_DCMP_DEAMINASES_2"/>
    <property type="match status" value="1"/>
</dbReference>
<proteinExistence type="evidence at transcript level"/>
<sequence length="199" mass="24052">MDSLLKKQRQFLYQFKNVRWAKGRHETYLCYVVKRRDSPTSFSLDFGHLRNKAGCHVELLFLRYISDWDLDPGRCYRVTWFTSWSPCYDCARHVADFLRGYPNLSLRIFTARLYFCDKERKAEPEGLRRLHRAGVQIAIMTFKDYFYCWNTFVENHERTFKAWEGLHENSVRLSRQLRRILLPLYEVDDLRDAFRTLGL</sequence>
<protein>
    <recommendedName>
        <fullName>Single-stranded DNA cytosine deaminase</fullName>
        <ecNumber evidence="4">3.5.4.38</ecNumber>
    </recommendedName>
    <alternativeName>
        <fullName>Activation-induced cytidine deaminase</fullName>
        <shortName>AID</shortName>
    </alternativeName>
    <alternativeName>
        <fullName>Cytidine aminohydrolase</fullName>
    </alternativeName>
</protein>
<evidence type="ECO:0000250" key="1"/>
<evidence type="ECO:0000250" key="2">
    <source>
        <dbReference type="UniProtKB" id="P0ABF6"/>
    </source>
</evidence>
<evidence type="ECO:0000250" key="3">
    <source>
        <dbReference type="UniProtKB" id="Q9GZX7"/>
    </source>
</evidence>
<evidence type="ECO:0000250" key="4">
    <source>
        <dbReference type="UniProtKB" id="Q9WVE0"/>
    </source>
</evidence>
<evidence type="ECO:0000255" key="5">
    <source>
        <dbReference type="PROSITE-ProRule" id="PRU01083"/>
    </source>
</evidence>
<evidence type="ECO:0000269" key="6">
    <source>
    </source>
</evidence>
<evidence type="ECO:0000305" key="7"/>